<keyword id="KW-1003">Cell membrane</keyword>
<keyword id="KW-0449">Lipoprotein</keyword>
<keyword id="KW-0472">Membrane</keyword>
<keyword id="KW-0488">Methylation</keyword>
<keyword id="KW-0564">Palmitate</keyword>
<keyword id="KW-0597">Phosphoprotein</keyword>
<keyword id="KW-1185">Reference proteome</keyword>
<keyword id="KW-0832">Ubl conjugation</keyword>
<comment type="function">
    <text evidence="6 8 9">Tyrosine kinase substrate that inhibits growth-factor-mediated activation of MAP kinase (PubMed:12646235). Inhibits fibroblast growth factor (FGF)-induced retinal lens fiber differentiation, probably by inhibiting FGF-mediated phosphorylation of ERK1/2 (PubMed:29501879). Inhibits TGFB-induced epithelial-to-mesenchymal transition in lens epithelial cells (PubMed:25576668).</text>
</comment>
<comment type="subunit">
    <text evidence="7">Interacts with palmitoyltransferase ZDHHC17/HIP14; the interaction leads to palmitoylation of SPRED3.</text>
</comment>
<comment type="subcellular location">
    <subcellularLocation>
        <location evidence="6 7">Cell membrane</location>
        <topology evidence="6">Peripheral membrane protein</topology>
    </subcellularLocation>
</comment>
<comment type="tissue specificity">
    <text evidence="6">Brain specific.</text>
</comment>
<comment type="PTM">
    <text evidence="1">Phosphorylated on tyrosine.</text>
</comment>
<comment type="PTM">
    <text evidence="7">Palmitoylated by ZDHHC17/HIP14.</text>
</comment>
<comment type="PTM">
    <text evidence="1">Ubiquitinated.</text>
</comment>
<evidence type="ECO:0000250" key="1">
    <source>
        <dbReference type="UniProtKB" id="Q2MJR0"/>
    </source>
</evidence>
<evidence type="ECO:0000255" key="2">
    <source>
        <dbReference type="PROSITE-ProRule" id="PRU00410"/>
    </source>
</evidence>
<evidence type="ECO:0000255" key="3">
    <source>
        <dbReference type="PROSITE-ProRule" id="PRU00572"/>
    </source>
</evidence>
<evidence type="ECO:0000255" key="4">
    <source>
        <dbReference type="PROSITE-ProRule" id="PRU00821"/>
    </source>
</evidence>
<evidence type="ECO:0000256" key="5">
    <source>
        <dbReference type="SAM" id="MobiDB-lite"/>
    </source>
</evidence>
<evidence type="ECO:0000269" key="6">
    <source>
    </source>
</evidence>
<evidence type="ECO:0000269" key="7">
    <source>
    </source>
</evidence>
<evidence type="ECO:0000269" key="8">
    <source>
    </source>
</evidence>
<evidence type="ECO:0000269" key="9">
    <source>
    </source>
</evidence>
<evidence type="ECO:0000305" key="10"/>
<evidence type="ECO:0007744" key="11">
    <source>
    </source>
</evidence>
<accession>Q6P6N5</accession>
<accession>Q7TNJ8</accession>
<protein>
    <recommendedName>
        <fullName>Sprouty-related, EVH1 domain-containing protein 3</fullName>
        <shortName>Spred-3</shortName>
    </recommendedName>
</protein>
<proteinExistence type="evidence at protein level"/>
<gene>
    <name type="primary">Spred3</name>
</gene>
<dbReference type="EMBL" id="AB115762">
    <property type="protein sequence ID" value="BAC80222.1"/>
    <property type="molecule type" value="mRNA"/>
</dbReference>
<dbReference type="EMBL" id="BC062119">
    <property type="protein sequence ID" value="AAH62119.1"/>
    <property type="molecule type" value="mRNA"/>
</dbReference>
<dbReference type="CCDS" id="CCDS21065.1"/>
<dbReference type="RefSeq" id="NP_891557.3">
    <property type="nucleotide sequence ID" value="NM_182927.3"/>
</dbReference>
<dbReference type="RefSeq" id="XP_006539516.1">
    <property type="nucleotide sequence ID" value="XM_006539453.2"/>
</dbReference>
<dbReference type="RefSeq" id="XP_006539517.1">
    <property type="nucleotide sequence ID" value="XM_006539454.3"/>
</dbReference>
<dbReference type="RefSeq" id="XP_006539518.1">
    <property type="nucleotide sequence ID" value="XM_006539455.3"/>
</dbReference>
<dbReference type="RefSeq" id="XP_006539519.1">
    <property type="nucleotide sequence ID" value="XM_006539456.2"/>
</dbReference>
<dbReference type="SMR" id="Q6P6N5"/>
<dbReference type="BioGRID" id="221733">
    <property type="interactions" value="1"/>
</dbReference>
<dbReference type="FunCoup" id="Q6P6N5">
    <property type="interactions" value="434"/>
</dbReference>
<dbReference type="IntAct" id="Q6P6N5">
    <property type="interactions" value="3"/>
</dbReference>
<dbReference type="MINT" id="Q6P6N5"/>
<dbReference type="STRING" id="10090.ENSMUSP00000046216"/>
<dbReference type="GlyGen" id="Q6P6N5">
    <property type="glycosylation" value="3 sites, 1 O-linked glycan (2 sites)"/>
</dbReference>
<dbReference type="iPTMnet" id="Q6P6N5"/>
<dbReference type="PhosphoSitePlus" id="Q6P6N5"/>
<dbReference type="SwissPalm" id="Q6P6N5"/>
<dbReference type="PaxDb" id="10090-ENSMUSP00000046216"/>
<dbReference type="ProteomicsDB" id="261630"/>
<dbReference type="DNASU" id="101809"/>
<dbReference type="GeneID" id="101809"/>
<dbReference type="KEGG" id="mmu:101809"/>
<dbReference type="UCSC" id="uc009gax.1">
    <property type="organism name" value="mouse"/>
</dbReference>
<dbReference type="AGR" id="MGI:2142186"/>
<dbReference type="CTD" id="399473"/>
<dbReference type="MGI" id="MGI:2142186">
    <property type="gene designation" value="Spred3"/>
</dbReference>
<dbReference type="eggNOG" id="KOG4590">
    <property type="taxonomic scope" value="Eukaryota"/>
</dbReference>
<dbReference type="InParanoid" id="Q6P6N5"/>
<dbReference type="OrthoDB" id="9629585at2759"/>
<dbReference type="PhylomeDB" id="Q6P6N5"/>
<dbReference type="TreeFam" id="TF321411"/>
<dbReference type="Reactome" id="R-MMU-5658442">
    <property type="pathway name" value="Regulation of RAS by GAPs"/>
</dbReference>
<dbReference type="BioGRID-ORCS" id="101809">
    <property type="hits" value="1 hit in 78 CRISPR screens"/>
</dbReference>
<dbReference type="PRO" id="PR:Q6P6N5"/>
<dbReference type="Proteomes" id="UP000000589">
    <property type="component" value="Unplaced"/>
</dbReference>
<dbReference type="RNAct" id="Q6P6N5">
    <property type="molecule type" value="protein"/>
</dbReference>
<dbReference type="GO" id="GO:0005886">
    <property type="term" value="C:plasma membrane"/>
    <property type="evidence" value="ECO:0000314"/>
    <property type="project" value="MGI"/>
</dbReference>
<dbReference type="GO" id="GO:0010719">
    <property type="term" value="P:negative regulation of epithelial to mesenchymal transition"/>
    <property type="evidence" value="ECO:0000314"/>
    <property type="project" value="UniProtKB"/>
</dbReference>
<dbReference type="GO" id="GO:0070373">
    <property type="term" value="P:negative regulation of ERK1 and ERK2 cascade"/>
    <property type="evidence" value="ECO:0000314"/>
    <property type="project" value="UniProtKB"/>
</dbReference>
<dbReference type="GO" id="GO:1902747">
    <property type="term" value="P:negative regulation of lens fiber cell differentiation"/>
    <property type="evidence" value="ECO:0000314"/>
    <property type="project" value="UniProtKB"/>
</dbReference>
<dbReference type="GO" id="GO:0043409">
    <property type="term" value="P:negative regulation of MAPK cascade"/>
    <property type="evidence" value="ECO:0000315"/>
    <property type="project" value="MGI"/>
</dbReference>
<dbReference type="GO" id="GO:0030512">
    <property type="term" value="P:negative regulation of transforming growth factor beta receptor signaling pathway"/>
    <property type="evidence" value="ECO:0000314"/>
    <property type="project" value="UniProtKB"/>
</dbReference>
<dbReference type="CDD" id="cd10574">
    <property type="entry name" value="EVH1_SPRED-like"/>
    <property type="match status" value="1"/>
</dbReference>
<dbReference type="FunFam" id="2.30.29.30:FF:000052">
    <property type="entry name" value="Sprouty-related, EVH1 domain containing 2"/>
    <property type="match status" value="1"/>
</dbReference>
<dbReference type="Gene3D" id="2.30.29.30">
    <property type="entry name" value="Pleckstrin-homology domain (PH domain)/Phosphotyrosine-binding domain (PTB)"/>
    <property type="match status" value="1"/>
</dbReference>
<dbReference type="InterPro" id="IPR023337">
    <property type="entry name" value="KBD"/>
</dbReference>
<dbReference type="InterPro" id="IPR011993">
    <property type="entry name" value="PH-like_dom_sf"/>
</dbReference>
<dbReference type="InterPro" id="IPR041937">
    <property type="entry name" value="SPRE_EVH1"/>
</dbReference>
<dbReference type="InterPro" id="IPR007875">
    <property type="entry name" value="Sprouty"/>
</dbReference>
<dbReference type="InterPro" id="IPR000697">
    <property type="entry name" value="WH1/EVH1_dom"/>
</dbReference>
<dbReference type="PANTHER" id="PTHR11202:SF19">
    <property type="entry name" value="SPROUTY-RELATED, EVH1 DOMAIN-CONTAINING PROTEIN 3"/>
    <property type="match status" value="1"/>
</dbReference>
<dbReference type="PANTHER" id="PTHR11202">
    <property type="entry name" value="SPROUTY-RELATED, EVH1 DOMAIN-CONTAINING PROTEIN FAMILY MEMBER"/>
    <property type="match status" value="1"/>
</dbReference>
<dbReference type="Pfam" id="PF05210">
    <property type="entry name" value="Sprouty"/>
    <property type="match status" value="1"/>
</dbReference>
<dbReference type="Pfam" id="PF00568">
    <property type="entry name" value="WH1"/>
    <property type="match status" value="1"/>
</dbReference>
<dbReference type="SMART" id="SM00461">
    <property type="entry name" value="WH1"/>
    <property type="match status" value="1"/>
</dbReference>
<dbReference type="SUPFAM" id="SSF50729">
    <property type="entry name" value="PH domain-like"/>
    <property type="match status" value="1"/>
</dbReference>
<dbReference type="PROSITE" id="PS51488">
    <property type="entry name" value="KBD"/>
    <property type="match status" value="1"/>
</dbReference>
<dbReference type="PROSITE" id="PS51227">
    <property type="entry name" value="SPR"/>
    <property type="match status" value="1"/>
</dbReference>
<dbReference type="PROSITE" id="PS50229">
    <property type="entry name" value="WH1"/>
    <property type="match status" value="1"/>
</dbReference>
<sequence>MVRVRAVVMARDDSSGGWLPVGGGGLSQVSVCRVRGARPEGGARQGHYVIHGERLRDQKTTLECTLRPGLVYNKVNPIFHHWSLGDCKFGLTFQSPAEADEFQKSLLAALAALSRGSLTPSSSSSSSSPSQDTAETPCPLTSHVDSDSSSSHSRQETPPTAPIATVESAAAFPLATRPQRRRSSAQSYPPLLPFTGIPEPSESLAGAGSQGWGSRGYEDYRRSGPPPPPLALSTCVVRFAKTGALRGAALGPPVSLPAPLTEAAPPAPPARPPPGPGPTPAPAKASPEAEEAARCVHCRALFRRRADGRGGRCAEAPDPGRLLVRRLSCLWCAESLLYHCLSDAEGDFSDPCACEPGHPRPAARWAALAALSLAVPCLCCYAPLRACHWVAARCGCAGCGGRHEEAAR</sequence>
<feature type="chain" id="PRO_0000076914" description="Sprouty-related, EVH1 domain-containing protein 3">
    <location>
        <begin position="1"/>
        <end position="408"/>
    </location>
</feature>
<feature type="domain" description="WH1" evidence="2">
    <location>
        <begin position="1"/>
        <end position="113"/>
    </location>
</feature>
<feature type="domain" description="KBD" evidence="4">
    <location>
        <begin position="192"/>
        <end position="242"/>
    </location>
</feature>
<feature type="domain" description="SPR" evidence="3">
    <location>
        <begin position="294"/>
        <end position="405"/>
    </location>
</feature>
<feature type="region of interest" description="Disordered" evidence="5">
    <location>
        <begin position="118"/>
        <end position="226"/>
    </location>
</feature>
<feature type="region of interest" description="Disordered" evidence="5">
    <location>
        <begin position="256"/>
        <end position="286"/>
    </location>
</feature>
<feature type="compositionally biased region" description="Low complexity" evidence="5">
    <location>
        <begin position="120"/>
        <end position="130"/>
    </location>
</feature>
<feature type="compositionally biased region" description="Pro residues" evidence="5">
    <location>
        <begin position="265"/>
        <end position="281"/>
    </location>
</feature>
<feature type="modified residue" description="Asymmetric dimethylarginine" evidence="11">
    <location>
        <position position="238"/>
    </location>
</feature>
<feature type="modified residue" description="Omega-N-methylarginine" evidence="11">
    <location>
        <position position="246"/>
    </location>
</feature>
<feature type="sequence conflict" description="In Ref. 1; BAC80222." evidence="10" ref="1">
    <original>R</original>
    <variation>P</variation>
    <location>
        <position position="177"/>
    </location>
</feature>
<name>SPRE3_MOUSE</name>
<organism>
    <name type="scientific">Mus musculus</name>
    <name type="common">Mouse</name>
    <dbReference type="NCBI Taxonomy" id="10090"/>
    <lineage>
        <taxon>Eukaryota</taxon>
        <taxon>Metazoa</taxon>
        <taxon>Chordata</taxon>
        <taxon>Craniata</taxon>
        <taxon>Vertebrata</taxon>
        <taxon>Euteleostomi</taxon>
        <taxon>Mammalia</taxon>
        <taxon>Eutheria</taxon>
        <taxon>Euarchontoglires</taxon>
        <taxon>Glires</taxon>
        <taxon>Rodentia</taxon>
        <taxon>Myomorpha</taxon>
        <taxon>Muroidea</taxon>
        <taxon>Muridae</taxon>
        <taxon>Murinae</taxon>
        <taxon>Mus</taxon>
        <taxon>Mus</taxon>
    </lineage>
</organism>
<reference key="1">
    <citation type="journal article" date="2003" name="Biochem. Biophys. Res. Commun.">
        <title>Molecular cloning of mammalian Spred-3 which suppresses tyrosine kinase-mediated Erk activation.</title>
        <authorList>
            <person name="Kato R."/>
            <person name="Nonami A."/>
            <person name="Taketomi T."/>
            <person name="Wakioka T."/>
            <person name="Kuroiwa A."/>
            <person name="Matsuda Y."/>
            <person name="Yoshimura A."/>
        </authorList>
    </citation>
    <scope>NUCLEOTIDE SEQUENCE [MRNA]</scope>
    <scope>FUNCTION</scope>
    <scope>SUBCELLULAR LOCATION</scope>
    <scope>TISSUE SPECIFICITY</scope>
</reference>
<reference key="2">
    <citation type="journal article" date="2004" name="Genome Res.">
        <title>The status, quality, and expansion of the NIH full-length cDNA project: the Mammalian Gene Collection (MGC).</title>
        <authorList>
            <consortium name="The MGC Project Team"/>
        </authorList>
    </citation>
    <scope>NUCLEOTIDE SEQUENCE [LARGE SCALE MRNA]</scope>
    <source>
        <strain>C57BL/6J</strain>
        <tissue>Brain</tissue>
    </source>
</reference>
<reference key="3">
    <citation type="journal article" date="2010" name="Cell">
        <title>A tissue-specific atlas of mouse protein phosphorylation and expression.</title>
        <authorList>
            <person name="Huttlin E.L."/>
            <person name="Jedrychowski M.P."/>
            <person name="Elias J.E."/>
            <person name="Goswami T."/>
            <person name="Rad R."/>
            <person name="Beausoleil S.A."/>
            <person name="Villen J."/>
            <person name="Haas W."/>
            <person name="Sowa M.E."/>
            <person name="Gygi S.P."/>
        </authorList>
    </citation>
    <scope>IDENTIFICATION BY MASS SPECTROMETRY [LARGE SCALE ANALYSIS]</scope>
    <source>
        <tissue>Brain</tissue>
    </source>
</reference>
<reference key="4">
    <citation type="journal article" date="2014" name="Hum. Mol. Genet.">
        <title>The palmitoyl acyltransferase HIP14 shares a high proportion of interactors with huntingtin: implications for a role in the pathogenesis of Huntington's disease.</title>
        <authorList>
            <person name="Butland S.L."/>
            <person name="Sanders S.S."/>
            <person name="Schmidt M.E."/>
            <person name="Riechers S.P."/>
            <person name="Lin D.T."/>
            <person name="Martin D.D."/>
            <person name="Vaid K."/>
            <person name="Graham R.K."/>
            <person name="Singaraja R.R."/>
            <person name="Wanker E.E."/>
            <person name="Conibear E."/>
            <person name="Hayden M.R."/>
        </authorList>
    </citation>
    <scope>INTERACTION WITH ZDHHC17</scope>
    <scope>SUBCELLULAR LOCATION</scope>
    <scope>PALMITOYLATION</scope>
</reference>
<reference key="5">
    <citation type="journal article" date="2014" name="Mol. Cell. Proteomics">
        <title>Immunoaffinity enrichment and mass spectrometry analysis of protein methylation.</title>
        <authorList>
            <person name="Guo A."/>
            <person name="Gu H."/>
            <person name="Zhou J."/>
            <person name="Mulhern D."/>
            <person name="Wang Y."/>
            <person name="Lee K.A."/>
            <person name="Yang V."/>
            <person name="Aguiar M."/>
            <person name="Kornhauser J."/>
            <person name="Jia X."/>
            <person name="Ren J."/>
            <person name="Beausoleil S.A."/>
            <person name="Silva J.C."/>
            <person name="Vemulapalli V."/>
            <person name="Bedford M.T."/>
            <person name="Comb M.J."/>
        </authorList>
    </citation>
    <scope>METHYLATION [LARGE SCALE ANALYSIS] AT ARG-238 AND ARG-246</scope>
    <scope>IDENTIFICATION BY MASS SPECTROMETRY [LARGE SCALE ANALYSIS]</scope>
    <source>
        <tissue>Brain</tissue>
        <tissue>Embryo</tissue>
    </source>
</reference>
<reference key="6">
    <citation type="journal article" date="2015" name="Exp. Eye Res.">
        <title>Negative regulation of TGFbeta-induced lens epithelial to mesenchymal transition (EMT) by RTK antagonists.</title>
        <authorList>
            <person name="Zhao G."/>
            <person name="Wojciechowski M.C."/>
            <person name="Jee S."/>
            <person name="Boros J."/>
            <person name="McAvoy J.W."/>
            <person name="Lovicu F.J."/>
        </authorList>
    </citation>
    <scope>FUNCTION</scope>
</reference>
<reference key="7">
    <citation type="journal article" date="2018" name="Exp. Eye Res.">
        <title>Negative regulation of lens fiber cell differentiation by RTK antagonists Spry and Spred.</title>
        <authorList>
            <person name="Zhao G."/>
            <person name="Bailey C.G."/>
            <person name="Feng Y."/>
            <person name="Rasko J."/>
            <person name="Lovicu F.J."/>
        </authorList>
    </citation>
    <scope>FUNCTION</scope>
</reference>